<gene>
    <name type="primary">CHI</name>
</gene>
<name>CFI_PYRCO</name>
<organism>
    <name type="scientific">Pyrus communis</name>
    <name type="common">Pear</name>
    <name type="synonym">Pyrus domestica</name>
    <dbReference type="NCBI Taxonomy" id="23211"/>
    <lineage>
        <taxon>Eukaryota</taxon>
        <taxon>Viridiplantae</taxon>
        <taxon>Streptophyta</taxon>
        <taxon>Embryophyta</taxon>
        <taxon>Tracheophyta</taxon>
        <taxon>Spermatophyta</taxon>
        <taxon>Magnoliopsida</taxon>
        <taxon>eudicotyledons</taxon>
        <taxon>Gunneridae</taxon>
        <taxon>Pentapetalae</taxon>
        <taxon>rosids</taxon>
        <taxon>fabids</taxon>
        <taxon>Rosales</taxon>
        <taxon>Rosaceae</taxon>
        <taxon>Amygdaloideae</taxon>
        <taxon>Maleae</taxon>
        <taxon>Pyrus</taxon>
    </lineage>
</organism>
<comment type="function">
    <text evidence="1">Catalyzes the intramolecular cyclization of bicyclic chalcones into tricyclic (S)-flavanones. Responsible for the isomerization of 4,2',4',6'-tetrahydroxychalcone (also termed chalcone) into naringenin (By similarity).</text>
</comment>
<comment type="catalytic activity">
    <reaction>
        <text>a chalcone = a flavanone.</text>
        <dbReference type="EC" id="5.5.1.6"/>
    </reaction>
</comment>
<comment type="pathway">
    <text>Secondary metabolite biosynthesis; flavonoid biosynthesis.</text>
</comment>
<comment type="miscellaneous">
    <text>Part of the biosynthetic pathway for all classes of flavonoids, a large class of secondary plant metabolites, many of which are brightly colored.</text>
</comment>
<comment type="similarity">
    <text evidence="2">Belongs to the chalcone isomerase family.</text>
</comment>
<dbReference type="EC" id="5.5.1.6"/>
<dbReference type="EMBL" id="EF446163">
    <property type="protein sequence ID" value="ABQ08639.1"/>
    <property type="molecule type" value="mRNA"/>
</dbReference>
<dbReference type="SMR" id="A5HBK6"/>
<dbReference type="UniPathway" id="UPA00154"/>
<dbReference type="GO" id="GO:0045430">
    <property type="term" value="F:chalcone isomerase activity"/>
    <property type="evidence" value="ECO:0007669"/>
    <property type="project" value="UniProtKB-EC"/>
</dbReference>
<dbReference type="GO" id="GO:0009813">
    <property type="term" value="P:flavonoid biosynthetic process"/>
    <property type="evidence" value="ECO:0007669"/>
    <property type="project" value="UniProtKB-UniPathway"/>
</dbReference>
<dbReference type="Gene3D" id="1.10.890.20">
    <property type="match status" value="1"/>
</dbReference>
<dbReference type="Gene3D" id="3.50.70.10">
    <property type="match status" value="1"/>
</dbReference>
<dbReference type="InterPro" id="IPR044164">
    <property type="entry name" value="CFI"/>
</dbReference>
<dbReference type="InterPro" id="IPR016087">
    <property type="entry name" value="Chalcone_isomerase"/>
</dbReference>
<dbReference type="InterPro" id="IPR016088">
    <property type="entry name" value="Chalcone_isomerase_3-sand"/>
</dbReference>
<dbReference type="InterPro" id="IPR016089">
    <property type="entry name" value="Chalcone_isomerase_bundle_sf"/>
</dbReference>
<dbReference type="InterPro" id="IPR036298">
    <property type="entry name" value="Chalcone_isomerase_sf"/>
</dbReference>
<dbReference type="PANTHER" id="PTHR28039:SF8">
    <property type="entry name" value="CHALCONE--FLAVANONE ISOMERASE 1-RELATED"/>
    <property type="match status" value="1"/>
</dbReference>
<dbReference type="PANTHER" id="PTHR28039">
    <property type="entry name" value="CHALCONE--FLAVONONE ISOMERASE 1-RELATED"/>
    <property type="match status" value="1"/>
</dbReference>
<dbReference type="Pfam" id="PF02431">
    <property type="entry name" value="Chalcone"/>
    <property type="match status" value="1"/>
</dbReference>
<dbReference type="SUPFAM" id="SSF54626">
    <property type="entry name" value="Chalcone isomerase"/>
    <property type="match status" value="1"/>
</dbReference>
<reference key="1">
    <citation type="submission" date="2007-02" db="EMBL/GenBank/DDBJ databases">
        <title>Flavonoid genes of pear (Pyrus communis).</title>
        <authorList>
            <person name="Fischer T.C."/>
            <person name="Halle C."/>
        </authorList>
    </citation>
    <scope>NUCLEOTIDE SEQUENCE [MRNA]</scope>
    <source>
        <strain>cv. Conference</strain>
    </source>
</reference>
<feature type="chain" id="PRO_0000300848" description="Chalcone--flavanone isomerase">
    <location>
        <begin position="1"/>
        <end position="219"/>
    </location>
</feature>
<feature type="binding site" evidence="1">
    <location>
        <position position="50"/>
    </location>
    <ligand>
        <name>substrate</name>
    </ligand>
</feature>
<feature type="binding site" evidence="1">
    <location>
        <position position="115"/>
    </location>
    <ligand>
        <name>substrate</name>
    </ligand>
</feature>
<feature type="binding site" evidence="1">
    <location>
        <position position="192"/>
    </location>
    <ligand>
        <name>substrate</name>
    </ligand>
</feature>
<feature type="site" description="Important for catalytic activity" evidence="1">
    <location>
        <position position="108"/>
    </location>
</feature>
<accession>A5HBK6</accession>
<protein>
    <recommendedName>
        <fullName>Chalcone--flavanone isomerase</fullName>
        <shortName>Chalcone isomerase</shortName>
        <ecNumber>5.5.1.6</ecNumber>
    </recommendedName>
</protein>
<proteinExistence type="evidence at transcript level"/>
<evidence type="ECO:0000250" key="1"/>
<evidence type="ECO:0000305" key="2"/>
<sequence length="219" mass="23364">MAPPPSLAGLQVEATAFPPSVKPPGSSNTLFLGGAGVRGLEIQGNFVKFTAIGVYLEDNAVPLLAVKWKGKTAEELSESVEFFRDIVTGPFEKFIQVTTILPLTGQQYSEKVSENCVAFWKSVGIYTDAEGKAIEKFIEVFKDQNFPPGASILFTQSPKGSLTICFSKDASVPEAANAVIENKLLSEAVLESILGKHGVSPAAKRSLAARLSELLNGCK</sequence>
<keyword id="KW-0284">Flavonoid biosynthesis</keyword>
<keyword id="KW-0413">Isomerase</keyword>